<sequence>MITGIQITKAANDDLLNSFWLLDSEKGEARCIVAKAGYAEDEVVAVSKLGDIEYREVPVEVKPEVRVEGGQHLNVNVLRRETLEDAVKHPEKYPQLTIRVSGYAVRFNSLTPEQQRDVIARTFTESL</sequence>
<gene>
    <name evidence="1" type="primary">grcA</name>
    <name type="ordered locus">Z3862</name>
    <name type="ordered locus">ECs3445</name>
</gene>
<protein>
    <recommendedName>
        <fullName evidence="1">Autonomous glycyl radical cofactor</fullName>
    </recommendedName>
</protein>
<accession>P68067</accession>
<accession>P33633</accession>
<feature type="chain" id="PRO_0000166698" description="Autonomous glycyl radical cofactor">
    <location>
        <begin position="1"/>
        <end position="127"/>
    </location>
</feature>
<feature type="domain" description="Glycine radical" evidence="1">
    <location>
        <begin position="5"/>
        <end position="127"/>
    </location>
</feature>
<feature type="modified residue" description="N6-acetyllysine" evidence="1">
    <location>
        <position position="48"/>
    </location>
</feature>
<feature type="modified residue" description="N6-acetyllysine" evidence="1">
    <location>
        <position position="88"/>
    </location>
</feature>
<feature type="modified residue" description="N6-acetyllysine" evidence="1">
    <location>
        <position position="92"/>
    </location>
</feature>
<feature type="modified residue" description="Glycine radical" evidence="1">
    <location>
        <position position="102"/>
    </location>
</feature>
<reference key="1">
    <citation type="journal article" date="2001" name="Nature">
        <title>Genome sequence of enterohaemorrhagic Escherichia coli O157:H7.</title>
        <authorList>
            <person name="Perna N.T."/>
            <person name="Plunkett G. III"/>
            <person name="Burland V."/>
            <person name="Mau B."/>
            <person name="Glasner J.D."/>
            <person name="Rose D.J."/>
            <person name="Mayhew G.F."/>
            <person name="Evans P.S."/>
            <person name="Gregor J."/>
            <person name="Kirkpatrick H.A."/>
            <person name="Posfai G."/>
            <person name="Hackett J."/>
            <person name="Klink S."/>
            <person name="Boutin A."/>
            <person name="Shao Y."/>
            <person name="Miller L."/>
            <person name="Grotbeck E.J."/>
            <person name="Davis N.W."/>
            <person name="Lim A."/>
            <person name="Dimalanta E.T."/>
            <person name="Potamousis K."/>
            <person name="Apodaca J."/>
            <person name="Anantharaman T.S."/>
            <person name="Lin J."/>
            <person name="Yen G."/>
            <person name="Schwartz D.C."/>
            <person name="Welch R.A."/>
            <person name="Blattner F.R."/>
        </authorList>
    </citation>
    <scope>NUCLEOTIDE SEQUENCE [LARGE SCALE GENOMIC DNA]</scope>
    <source>
        <strain>O157:H7 / EDL933 / ATCC 700927 / EHEC</strain>
    </source>
</reference>
<reference key="2">
    <citation type="journal article" date="2001" name="DNA Res.">
        <title>Complete genome sequence of enterohemorrhagic Escherichia coli O157:H7 and genomic comparison with a laboratory strain K-12.</title>
        <authorList>
            <person name="Hayashi T."/>
            <person name="Makino K."/>
            <person name="Ohnishi M."/>
            <person name="Kurokawa K."/>
            <person name="Ishii K."/>
            <person name="Yokoyama K."/>
            <person name="Han C.-G."/>
            <person name="Ohtsubo E."/>
            <person name="Nakayama K."/>
            <person name="Murata T."/>
            <person name="Tanaka M."/>
            <person name="Tobe T."/>
            <person name="Iida T."/>
            <person name="Takami H."/>
            <person name="Honda T."/>
            <person name="Sasakawa C."/>
            <person name="Ogasawara N."/>
            <person name="Yasunaga T."/>
            <person name="Kuhara S."/>
            <person name="Shiba T."/>
            <person name="Hattori M."/>
            <person name="Shinagawa H."/>
        </authorList>
    </citation>
    <scope>NUCLEOTIDE SEQUENCE [LARGE SCALE GENOMIC DNA]</scope>
    <source>
        <strain>O157:H7 / Sakai / RIMD 0509952 / EHEC</strain>
    </source>
</reference>
<evidence type="ECO:0000255" key="1">
    <source>
        <dbReference type="HAMAP-Rule" id="MF_00806"/>
    </source>
</evidence>
<organism>
    <name type="scientific">Escherichia coli O157:H7</name>
    <dbReference type="NCBI Taxonomy" id="83334"/>
    <lineage>
        <taxon>Bacteria</taxon>
        <taxon>Pseudomonadati</taxon>
        <taxon>Pseudomonadota</taxon>
        <taxon>Gammaproteobacteria</taxon>
        <taxon>Enterobacterales</taxon>
        <taxon>Enterobacteriaceae</taxon>
        <taxon>Escherichia</taxon>
    </lineage>
</organism>
<name>GRCA_ECO57</name>
<proteinExistence type="inferred from homology"/>
<comment type="function">
    <text evidence="1">Acts as a radical domain for damaged PFL and possibly other radical proteins.</text>
</comment>
<dbReference type="EMBL" id="AE005174">
    <property type="protein sequence ID" value="AAG57695.1"/>
    <property type="molecule type" value="Genomic_DNA"/>
</dbReference>
<dbReference type="EMBL" id="BA000007">
    <property type="protein sequence ID" value="BAB36868.1"/>
    <property type="molecule type" value="Genomic_DNA"/>
</dbReference>
<dbReference type="PIR" id="E91059">
    <property type="entry name" value="E91059"/>
</dbReference>
<dbReference type="RefSeq" id="NP_311472.1">
    <property type="nucleotide sequence ID" value="NC_002695.1"/>
</dbReference>
<dbReference type="RefSeq" id="WP_000627807.1">
    <property type="nucleotide sequence ID" value="NZ_VOAI01000001.1"/>
</dbReference>
<dbReference type="SMR" id="P68067"/>
<dbReference type="STRING" id="155864.Z3862"/>
<dbReference type="GeneID" id="914881"/>
<dbReference type="GeneID" id="93774507"/>
<dbReference type="KEGG" id="ece:Z3862"/>
<dbReference type="KEGG" id="ecs:ECs_3445"/>
<dbReference type="PATRIC" id="fig|386585.9.peg.3600"/>
<dbReference type="eggNOG" id="COG3445">
    <property type="taxonomic scope" value="Bacteria"/>
</dbReference>
<dbReference type="HOGENOM" id="CLU_133780_0_0_6"/>
<dbReference type="OMA" id="QFEYREL"/>
<dbReference type="Proteomes" id="UP000000558">
    <property type="component" value="Chromosome"/>
</dbReference>
<dbReference type="Proteomes" id="UP000002519">
    <property type="component" value="Chromosome"/>
</dbReference>
<dbReference type="GO" id="GO:0005829">
    <property type="term" value="C:cytosol"/>
    <property type="evidence" value="ECO:0007669"/>
    <property type="project" value="TreeGrafter"/>
</dbReference>
<dbReference type="GO" id="GO:0008861">
    <property type="term" value="F:formate C-acetyltransferase activity"/>
    <property type="evidence" value="ECO:0007669"/>
    <property type="project" value="TreeGrafter"/>
</dbReference>
<dbReference type="FunFam" id="3.20.70.20:FF:000002">
    <property type="entry name" value="Autonomous glycyl radical cofactor"/>
    <property type="match status" value="1"/>
</dbReference>
<dbReference type="Gene3D" id="3.20.70.20">
    <property type="match status" value="1"/>
</dbReference>
<dbReference type="HAMAP" id="MF_00806">
    <property type="entry name" value="GrcA"/>
    <property type="match status" value="1"/>
</dbReference>
<dbReference type="InterPro" id="IPR050244">
    <property type="entry name" value="Auton_GlycylRad_Cofactor"/>
</dbReference>
<dbReference type="InterPro" id="IPR019777">
    <property type="entry name" value="Form_AcTrfase_GR_CS"/>
</dbReference>
<dbReference type="InterPro" id="IPR001150">
    <property type="entry name" value="Gly_radical"/>
</dbReference>
<dbReference type="InterPro" id="IPR011140">
    <property type="entry name" value="Glycyl_radical_cofactor_GrcA"/>
</dbReference>
<dbReference type="NCBIfam" id="TIGR04365">
    <property type="entry name" value="spare_glycyl"/>
    <property type="match status" value="1"/>
</dbReference>
<dbReference type="PANTHER" id="PTHR30191">
    <property type="entry name" value="FORMATE ACETYLTRANSFERASE"/>
    <property type="match status" value="1"/>
</dbReference>
<dbReference type="PANTHER" id="PTHR30191:SF0">
    <property type="entry name" value="FORMATE ACETYLTRANSFERASE 1"/>
    <property type="match status" value="1"/>
</dbReference>
<dbReference type="Pfam" id="PF01228">
    <property type="entry name" value="Gly_radical"/>
    <property type="match status" value="1"/>
</dbReference>
<dbReference type="PIRSF" id="PIRSF000378">
    <property type="entry name" value="Gly_radicl_yfiD"/>
    <property type="match status" value="1"/>
</dbReference>
<dbReference type="SUPFAM" id="SSF51998">
    <property type="entry name" value="PFL-like glycyl radical enzymes"/>
    <property type="match status" value="1"/>
</dbReference>
<dbReference type="PROSITE" id="PS00850">
    <property type="entry name" value="GLY_RADICAL_1"/>
    <property type="match status" value="1"/>
</dbReference>
<dbReference type="PROSITE" id="PS51149">
    <property type="entry name" value="GLY_RADICAL_2"/>
    <property type="match status" value="1"/>
</dbReference>
<keyword id="KW-0007">Acetylation</keyword>
<keyword id="KW-0556">Organic radical</keyword>
<keyword id="KW-1185">Reference proteome</keyword>